<comment type="function">
    <text evidence="1">Specifically catalyzes the AdoMet-dependent 2'-O-ribose methylation of cytidine at position 56 in tRNAs.</text>
</comment>
<comment type="catalytic activity">
    <reaction evidence="1">
        <text>cytidine(56) in tRNA + S-adenosyl-L-methionine = 2'-O-methylcytidine(56) in tRNA + S-adenosyl-L-homocysteine + H(+)</text>
        <dbReference type="Rhea" id="RHEA:42968"/>
        <dbReference type="Rhea" id="RHEA-COMP:10308"/>
        <dbReference type="Rhea" id="RHEA-COMP:10309"/>
        <dbReference type="ChEBI" id="CHEBI:15378"/>
        <dbReference type="ChEBI" id="CHEBI:57856"/>
        <dbReference type="ChEBI" id="CHEBI:59789"/>
        <dbReference type="ChEBI" id="CHEBI:74495"/>
        <dbReference type="ChEBI" id="CHEBI:82748"/>
        <dbReference type="EC" id="2.1.1.206"/>
    </reaction>
</comment>
<comment type="subunit">
    <text evidence="1">Homodimer.</text>
</comment>
<comment type="subcellular location">
    <subcellularLocation>
        <location evidence="1">Cytoplasm</location>
    </subcellularLocation>
</comment>
<comment type="similarity">
    <text evidence="1">Belongs to the aTrm56 family.</text>
</comment>
<dbReference type="EC" id="2.1.1.206" evidence="1"/>
<dbReference type="EMBL" id="CP000609">
    <property type="protein sequence ID" value="ABO34470.1"/>
    <property type="molecule type" value="Genomic_DNA"/>
</dbReference>
<dbReference type="RefSeq" id="WP_011867930.1">
    <property type="nucleotide sequence ID" value="NC_009135.1"/>
</dbReference>
<dbReference type="SMR" id="A4FW99"/>
<dbReference type="STRING" id="402880.MmarC5_0153"/>
<dbReference type="GeneID" id="4927849"/>
<dbReference type="KEGG" id="mmq:MmarC5_0153"/>
<dbReference type="eggNOG" id="arCOG01857">
    <property type="taxonomic scope" value="Archaea"/>
</dbReference>
<dbReference type="HOGENOM" id="CLU_123709_0_0_2"/>
<dbReference type="OrthoDB" id="14397at2157"/>
<dbReference type="Proteomes" id="UP000000253">
    <property type="component" value="Chromosome"/>
</dbReference>
<dbReference type="GO" id="GO:0005737">
    <property type="term" value="C:cytoplasm"/>
    <property type="evidence" value="ECO:0007669"/>
    <property type="project" value="UniProtKB-SubCell"/>
</dbReference>
<dbReference type="GO" id="GO:0106059">
    <property type="term" value="F:tRNA (cytidine(56)-2'-O)-methyltransferase activity"/>
    <property type="evidence" value="ECO:0007669"/>
    <property type="project" value="UniProtKB-EC"/>
</dbReference>
<dbReference type="GO" id="GO:0002128">
    <property type="term" value="P:tRNA nucleoside ribose methylation"/>
    <property type="evidence" value="ECO:0007669"/>
    <property type="project" value="UniProtKB-UniRule"/>
</dbReference>
<dbReference type="CDD" id="cd18083">
    <property type="entry name" value="aTrm56-like"/>
    <property type="match status" value="1"/>
</dbReference>
<dbReference type="Gene3D" id="3.40.1280.10">
    <property type="match status" value="1"/>
</dbReference>
<dbReference type="HAMAP" id="MF_00077">
    <property type="entry name" value="tRNA_methyltr_aTrm56"/>
    <property type="match status" value="1"/>
</dbReference>
<dbReference type="InterPro" id="IPR029028">
    <property type="entry name" value="Alpha/beta_knot_MTases"/>
</dbReference>
<dbReference type="InterPro" id="IPR029026">
    <property type="entry name" value="tRNA_m1G_MTases_N"/>
</dbReference>
<dbReference type="InterPro" id="IPR002845">
    <property type="entry name" value="tRNA_mtfrase_aTrm56"/>
</dbReference>
<dbReference type="NCBIfam" id="NF003048">
    <property type="entry name" value="PRK03958.1"/>
    <property type="match status" value="1"/>
</dbReference>
<dbReference type="PANTHER" id="PTHR42197">
    <property type="entry name" value="TRNA (CYTIDINE(56)-2'-O)-METHYLTRANSFERASE"/>
    <property type="match status" value="1"/>
</dbReference>
<dbReference type="PANTHER" id="PTHR42197:SF1">
    <property type="entry name" value="TRNA (CYTIDINE(56)-2'-O)-METHYLTRANSFERASE"/>
    <property type="match status" value="1"/>
</dbReference>
<dbReference type="Pfam" id="PF01994">
    <property type="entry name" value="Trm56"/>
    <property type="match status" value="1"/>
</dbReference>
<dbReference type="PIRSF" id="PIRSF016123">
    <property type="entry name" value="UCP016123"/>
    <property type="match status" value="1"/>
</dbReference>
<dbReference type="SUPFAM" id="SSF75217">
    <property type="entry name" value="alpha/beta knot"/>
    <property type="match status" value="1"/>
</dbReference>
<name>TRM56_METM5</name>
<sequence length="179" mass="20443">MAIEILRLGHRGERDKRISTHVALTSRALGAEKIIFTEEDKHVKESVERIVDSWGGDFKFEVVKSWRTYAKRFKDNGIVVHLTMYGENINKIMTEIREDISKTNKNLLLIIGAEKVPREAYDLANYNLSVGNQPHSEVAALAIFLDRLTEGKTLYSEYDNAKIKVTPSKSEKCVFVEKD</sequence>
<organism>
    <name type="scientific">Methanococcus maripaludis (strain C5 / ATCC BAA-1333)</name>
    <dbReference type="NCBI Taxonomy" id="402880"/>
    <lineage>
        <taxon>Archaea</taxon>
        <taxon>Methanobacteriati</taxon>
        <taxon>Methanobacteriota</taxon>
        <taxon>Methanomada group</taxon>
        <taxon>Methanococci</taxon>
        <taxon>Methanococcales</taxon>
        <taxon>Methanococcaceae</taxon>
        <taxon>Methanococcus</taxon>
    </lineage>
</organism>
<feature type="chain" id="PRO_0000365307" description="tRNA (cytidine(56)-2'-O)-methyltransferase">
    <location>
        <begin position="1"/>
        <end position="179"/>
    </location>
</feature>
<feature type="binding site" evidence="1">
    <location>
        <position position="82"/>
    </location>
    <ligand>
        <name>S-adenosyl-L-methionine</name>
        <dbReference type="ChEBI" id="CHEBI:59789"/>
    </ligand>
</feature>
<feature type="binding site" evidence="1">
    <location>
        <begin position="112"/>
        <end position="116"/>
    </location>
    <ligand>
        <name>S-adenosyl-L-methionine</name>
        <dbReference type="ChEBI" id="CHEBI:59789"/>
    </ligand>
</feature>
<feature type="binding site" evidence="1">
    <location>
        <begin position="130"/>
        <end position="137"/>
    </location>
    <ligand>
        <name>S-adenosyl-L-methionine</name>
        <dbReference type="ChEBI" id="CHEBI:59789"/>
    </ligand>
</feature>
<keyword id="KW-0963">Cytoplasm</keyword>
<keyword id="KW-0489">Methyltransferase</keyword>
<keyword id="KW-0949">S-adenosyl-L-methionine</keyword>
<keyword id="KW-0808">Transferase</keyword>
<keyword id="KW-0819">tRNA processing</keyword>
<protein>
    <recommendedName>
        <fullName evidence="1">tRNA (cytidine(56)-2'-O)-methyltransferase</fullName>
        <ecNumber evidence="1">2.1.1.206</ecNumber>
    </recommendedName>
    <alternativeName>
        <fullName evidence="1">tRNA ribose 2'-O-methyltransferase aTrm56</fullName>
    </alternativeName>
</protein>
<reference key="1">
    <citation type="submission" date="2007-03" db="EMBL/GenBank/DDBJ databases">
        <title>Complete sequence of chromosome of Methanococcus maripaludis C5.</title>
        <authorList>
            <consortium name="US DOE Joint Genome Institute"/>
            <person name="Copeland A."/>
            <person name="Lucas S."/>
            <person name="Lapidus A."/>
            <person name="Barry K."/>
            <person name="Glavina del Rio T."/>
            <person name="Dalin E."/>
            <person name="Tice H."/>
            <person name="Pitluck S."/>
            <person name="Chertkov O."/>
            <person name="Brettin T."/>
            <person name="Bruce D."/>
            <person name="Han C."/>
            <person name="Detter J.C."/>
            <person name="Schmutz J."/>
            <person name="Larimer F."/>
            <person name="Land M."/>
            <person name="Hauser L."/>
            <person name="Kyrpides N."/>
            <person name="Mikhailova N."/>
            <person name="Sieprawska-Lupa M."/>
            <person name="Whitman W.B."/>
            <person name="Richardson P."/>
        </authorList>
    </citation>
    <scope>NUCLEOTIDE SEQUENCE [LARGE SCALE GENOMIC DNA]</scope>
    <source>
        <strain>C5 / ATCC BAA-1333</strain>
    </source>
</reference>
<evidence type="ECO:0000255" key="1">
    <source>
        <dbReference type="HAMAP-Rule" id="MF_00077"/>
    </source>
</evidence>
<proteinExistence type="inferred from homology"/>
<accession>A4FW99</accession>
<gene>
    <name type="ordered locus">MmarC5_0153</name>
</gene>